<dbReference type="EC" id="4.2.1.33" evidence="1"/>
<dbReference type="EMBL" id="CP000304">
    <property type="protein sequence ID" value="ABP79448.1"/>
    <property type="molecule type" value="Genomic_DNA"/>
</dbReference>
<dbReference type="RefSeq" id="WP_011912925.1">
    <property type="nucleotide sequence ID" value="NC_009434.1"/>
</dbReference>
<dbReference type="SMR" id="A4VKE7"/>
<dbReference type="GeneID" id="66821768"/>
<dbReference type="KEGG" id="psa:PST_1772"/>
<dbReference type="eggNOG" id="COG0065">
    <property type="taxonomic scope" value="Bacteria"/>
</dbReference>
<dbReference type="HOGENOM" id="CLU_006714_3_4_6"/>
<dbReference type="UniPathway" id="UPA00048">
    <property type="reaction ID" value="UER00071"/>
</dbReference>
<dbReference type="Proteomes" id="UP000000233">
    <property type="component" value="Chromosome"/>
</dbReference>
<dbReference type="GO" id="GO:0003861">
    <property type="term" value="F:3-isopropylmalate dehydratase activity"/>
    <property type="evidence" value="ECO:0007669"/>
    <property type="project" value="UniProtKB-UniRule"/>
</dbReference>
<dbReference type="GO" id="GO:0051539">
    <property type="term" value="F:4 iron, 4 sulfur cluster binding"/>
    <property type="evidence" value="ECO:0007669"/>
    <property type="project" value="UniProtKB-KW"/>
</dbReference>
<dbReference type="GO" id="GO:0046872">
    <property type="term" value="F:metal ion binding"/>
    <property type="evidence" value="ECO:0007669"/>
    <property type="project" value="UniProtKB-KW"/>
</dbReference>
<dbReference type="GO" id="GO:0009098">
    <property type="term" value="P:L-leucine biosynthetic process"/>
    <property type="evidence" value="ECO:0007669"/>
    <property type="project" value="UniProtKB-UniRule"/>
</dbReference>
<dbReference type="CDD" id="cd01583">
    <property type="entry name" value="IPMI"/>
    <property type="match status" value="1"/>
</dbReference>
<dbReference type="FunFam" id="3.30.499.10:FF:000007">
    <property type="entry name" value="3-isopropylmalate dehydratase large subunit"/>
    <property type="match status" value="1"/>
</dbReference>
<dbReference type="Gene3D" id="3.30.499.10">
    <property type="entry name" value="Aconitase, domain 3"/>
    <property type="match status" value="2"/>
</dbReference>
<dbReference type="HAMAP" id="MF_01026">
    <property type="entry name" value="LeuC_type1"/>
    <property type="match status" value="1"/>
</dbReference>
<dbReference type="InterPro" id="IPR004430">
    <property type="entry name" value="3-IsopropMal_deHydase_lsu"/>
</dbReference>
<dbReference type="InterPro" id="IPR015931">
    <property type="entry name" value="Acnase/IPM_dHydase_lsu_aba_1/3"/>
</dbReference>
<dbReference type="InterPro" id="IPR001030">
    <property type="entry name" value="Acoase/IPM_deHydtase_lsu_aba"/>
</dbReference>
<dbReference type="InterPro" id="IPR018136">
    <property type="entry name" value="Aconitase_4Fe-4S_BS"/>
</dbReference>
<dbReference type="InterPro" id="IPR036008">
    <property type="entry name" value="Aconitase_4Fe-4S_dom"/>
</dbReference>
<dbReference type="InterPro" id="IPR050067">
    <property type="entry name" value="IPM_dehydratase_rel_enz"/>
</dbReference>
<dbReference type="InterPro" id="IPR033941">
    <property type="entry name" value="IPMI_cat"/>
</dbReference>
<dbReference type="NCBIfam" id="TIGR00170">
    <property type="entry name" value="leuC"/>
    <property type="match status" value="1"/>
</dbReference>
<dbReference type="NCBIfam" id="NF004016">
    <property type="entry name" value="PRK05478.1"/>
    <property type="match status" value="1"/>
</dbReference>
<dbReference type="NCBIfam" id="NF009116">
    <property type="entry name" value="PRK12466.1"/>
    <property type="match status" value="1"/>
</dbReference>
<dbReference type="PANTHER" id="PTHR43822:SF9">
    <property type="entry name" value="3-ISOPROPYLMALATE DEHYDRATASE"/>
    <property type="match status" value="1"/>
</dbReference>
<dbReference type="PANTHER" id="PTHR43822">
    <property type="entry name" value="HOMOACONITASE, MITOCHONDRIAL-RELATED"/>
    <property type="match status" value="1"/>
</dbReference>
<dbReference type="Pfam" id="PF00330">
    <property type="entry name" value="Aconitase"/>
    <property type="match status" value="1"/>
</dbReference>
<dbReference type="PRINTS" id="PR00415">
    <property type="entry name" value="ACONITASE"/>
</dbReference>
<dbReference type="SUPFAM" id="SSF53732">
    <property type="entry name" value="Aconitase iron-sulfur domain"/>
    <property type="match status" value="1"/>
</dbReference>
<dbReference type="PROSITE" id="PS00450">
    <property type="entry name" value="ACONITASE_1"/>
    <property type="match status" value="1"/>
</dbReference>
<dbReference type="PROSITE" id="PS01244">
    <property type="entry name" value="ACONITASE_2"/>
    <property type="match status" value="1"/>
</dbReference>
<gene>
    <name evidence="1" type="primary">leuC</name>
    <name type="ordered locus">PST_1772</name>
</gene>
<keyword id="KW-0004">4Fe-4S</keyword>
<keyword id="KW-0028">Amino-acid biosynthesis</keyword>
<keyword id="KW-0100">Branched-chain amino acid biosynthesis</keyword>
<keyword id="KW-0408">Iron</keyword>
<keyword id="KW-0411">Iron-sulfur</keyword>
<keyword id="KW-0432">Leucine biosynthesis</keyword>
<keyword id="KW-0456">Lyase</keyword>
<keyword id="KW-0479">Metal-binding</keyword>
<keyword id="KW-1185">Reference proteome</keyword>
<name>LEUC_STUS1</name>
<sequence length="475" mass="51152">MAGKTLYDKLWEMHEVKRRDDGSSLIYIDRHILHEVTSPQAFEGLRLANRKPWRIDANIATPDHNVPTTKGERQGGLEAIADEVSRIQVQTLDENCDDFGILEFKMNDVRQGIVHVIGPEQGATLPGMTVVCGDSHTSTHGAFGALAHGIGTSEVEHVLATQCLVAKKMKNMQVRVEGKLPFGVTAKDIVLAVIGKIGTAGGNGHALEFAGSAIRDLSMEGRMTICNMAIEAGARVGMVAVDEKTIAYVEGRPYAPKGADWDKAVKLWQDLVSDDDAVFDTIVELKAEDIKPQVSWGTSPEMVLAVDQNVPDPAVEADPVKKDSITRALKYMGLQANQAITDIRLDRVFIGSCTNSRIEDLRAAAEVAKGRKVAANVKQALVVPGSGLVKQQAEAEGLDKIFIEAGFEWREPGCSMCLAMNPDKLGSGEHCASTSNRNFEGRQGAGGRTHLVSPAMAAAAAVTGHFIDVRELIQA</sequence>
<reference key="1">
    <citation type="journal article" date="2008" name="Proc. Natl. Acad. Sci. U.S.A.">
        <title>Nitrogen fixation island and rhizosphere competence traits in the genome of root-associated Pseudomonas stutzeri A1501.</title>
        <authorList>
            <person name="Yan Y."/>
            <person name="Yang J."/>
            <person name="Dou Y."/>
            <person name="Chen M."/>
            <person name="Ping S."/>
            <person name="Peng J."/>
            <person name="Lu W."/>
            <person name="Zhang W."/>
            <person name="Yao Z."/>
            <person name="Li H."/>
            <person name="Liu W."/>
            <person name="He S."/>
            <person name="Geng L."/>
            <person name="Zhang X."/>
            <person name="Yang F."/>
            <person name="Yu H."/>
            <person name="Zhan Y."/>
            <person name="Li D."/>
            <person name="Lin Z."/>
            <person name="Wang Y."/>
            <person name="Elmerich C."/>
            <person name="Lin M."/>
            <person name="Jin Q."/>
        </authorList>
    </citation>
    <scope>NUCLEOTIDE SEQUENCE [LARGE SCALE GENOMIC DNA]</scope>
    <source>
        <strain>A1501</strain>
    </source>
</reference>
<feature type="chain" id="PRO_1000063594" description="3-isopropylmalate dehydratase large subunit">
    <location>
        <begin position="1"/>
        <end position="475"/>
    </location>
</feature>
<feature type="binding site" evidence="1">
    <location>
        <position position="353"/>
    </location>
    <ligand>
        <name>[4Fe-4S] cluster</name>
        <dbReference type="ChEBI" id="CHEBI:49883"/>
    </ligand>
</feature>
<feature type="binding site" evidence="1">
    <location>
        <position position="414"/>
    </location>
    <ligand>
        <name>[4Fe-4S] cluster</name>
        <dbReference type="ChEBI" id="CHEBI:49883"/>
    </ligand>
</feature>
<feature type="binding site" evidence="1">
    <location>
        <position position="417"/>
    </location>
    <ligand>
        <name>[4Fe-4S] cluster</name>
        <dbReference type="ChEBI" id="CHEBI:49883"/>
    </ligand>
</feature>
<accession>A4VKE7</accession>
<comment type="function">
    <text evidence="1">Catalyzes the isomerization between 2-isopropylmalate and 3-isopropylmalate, via the formation of 2-isopropylmaleate.</text>
</comment>
<comment type="catalytic activity">
    <reaction evidence="1">
        <text>(2R,3S)-3-isopropylmalate = (2S)-2-isopropylmalate</text>
        <dbReference type="Rhea" id="RHEA:32287"/>
        <dbReference type="ChEBI" id="CHEBI:1178"/>
        <dbReference type="ChEBI" id="CHEBI:35121"/>
        <dbReference type="EC" id="4.2.1.33"/>
    </reaction>
</comment>
<comment type="cofactor">
    <cofactor evidence="1">
        <name>[4Fe-4S] cluster</name>
        <dbReference type="ChEBI" id="CHEBI:49883"/>
    </cofactor>
    <text evidence="1">Binds 1 [4Fe-4S] cluster per subunit.</text>
</comment>
<comment type="pathway">
    <text evidence="1">Amino-acid biosynthesis; L-leucine biosynthesis; L-leucine from 3-methyl-2-oxobutanoate: step 2/4.</text>
</comment>
<comment type="subunit">
    <text evidence="1">Heterodimer of LeuC and LeuD.</text>
</comment>
<comment type="similarity">
    <text evidence="1">Belongs to the aconitase/IPM isomerase family. LeuC type 1 subfamily.</text>
</comment>
<evidence type="ECO:0000255" key="1">
    <source>
        <dbReference type="HAMAP-Rule" id="MF_01026"/>
    </source>
</evidence>
<organism>
    <name type="scientific">Stutzerimonas stutzeri (strain A1501)</name>
    <name type="common">Pseudomonas stutzeri</name>
    <dbReference type="NCBI Taxonomy" id="379731"/>
    <lineage>
        <taxon>Bacteria</taxon>
        <taxon>Pseudomonadati</taxon>
        <taxon>Pseudomonadota</taxon>
        <taxon>Gammaproteobacteria</taxon>
        <taxon>Pseudomonadales</taxon>
        <taxon>Pseudomonadaceae</taxon>
        <taxon>Stutzerimonas</taxon>
    </lineage>
</organism>
<proteinExistence type="inferred from homology"/>
<protein>
    <recommendedName>
        <fullName evidence="1">3-isopropylmalate dehydratase large subunit</fullName>
        <ecNumber evidence="1">4.2.1.33</ecNumber>
    </recommendedName>
    <alternativeName>
        <fullName evidence="1">Alpha-IPM isomerase</fullName>
        <shortName evidence="1">IPMI</shortName>
    </alternativeName>
    <alternativeName>
        <fullName evidence="1">Isopropylmalate isomerase</fullName>
    </alternativeName>
</protein>